<accession>Q2YNB0</accession>
<organism>
    <name type="scientific">Brucella abortus (strain 2308)</name>
    <dbReference type="NCBI Taxonomy" id="359391"/>
    <lineage>
        <taxon>Bacteria</taxon>
        <taxon>Pseudomonadati</taxon>
        <taxon>Pseudomonadota</taxon>
        <taxon>Alphaproteobacteria</taxon>
        <taxon>Hyphomicrobiales</taxon>
        <taxon>Brucellaceae</taxon>
        <taxon>Brucella/Ochrobactrum group</taxon>
        <taxon>Brucella</taxon>
    </lineage>
</organism>
<reference key="1">
    <citation type="journal article" date="2005" name="Infect. Immun.">
        <title>Whole-genome analyses of speciation events in pathogenic Brucellae.</title>
        <authorList>
            <person name="Chain P.S."/>
            <person name="Comerci D.J."/>
            <person name="Tolmasky M.E."/>
            <person name="Larimer F.W."/>
            <person name="Malfatti S.A."/>
            <person name="Vergez L.M."/>
            <person name="Aguero F."/>
            <person name="Land M.L."/>
            <person name="Ugalde R.A."/>
            <person name="Garcia E."/>
        </authorList>
    </citation>
    <scope>NUCLEOTIDE SEQUENCE [LARGE SCALE GENOMIC DNA]</scope>
    <source>
        <strain>2308</strain>
    </source>
</reference>
<comment type="function">
    <text evidence="1">Catalyzes the conversion of heme O to heme A by two successive hydroxylations of the methyl group at C8. The first hydroxylation forms heme I, the second hydroxylation results in an unstable dihydroxymethyl group, which spontaneously dehydrates, resulting in the formyl group of heme A.</text>
</comment>
<comment type="catalytic activity">
    <reaction evidence="1">
        <text>Fe(II)-heme o + 2 A + H2O = Fe(II)-heme a + 2 AH2</text>
        <dbReference type="Rhea" id="RHEA:63388"/>
        <dbReference type="ChEBI" id="CHEBI:13193"/>
        <dbReference type="ChEBI" id="CHEBI:15377"/>
        <dbReference type="ChEBI" id="CHEBI:17499"/>
        <dbReference type="ChEBI" id="CHEBI:60530"/>
        <dbReference type="ChEBI" id="CHEBI:61715"/>
        <dbReference type="EC" id="1.17.99.9"/>
    </reaction>
    <physiologicalReaction direction="left-to-right" evidence="1">
        <dbReference type="Rhea" id="RHEA:63389"/>
    </physiologicalReaction>
</comment>
<comment type="cofactor">
    <cofactor evidence="1">
        <name>heme b</name>
        <dbReference type="ChEBI" id="CHEBI:60344"/>
    </cofactor>
</comment>
<comment type="pathway">
    <text evidence="1">Porphyrin-containing compound metabolism; heme A biosynthesis; heme A from heme O: step 1/1.</text>
</comment>
<comment type="subunit">
    <text evidence="1">Interacts with CtaB.</text>
</comment>
<comment type="subcellular location">
    <subcellularLocation>
        <location evidence="1">Cell membrane</location>
        <topology evidence="1">Multi-pass membrane protein</topology>
    </subcellularLocation>
</comment>
<comment type="similarity">
    <text evidence="1">Belongs to the COX15/CtaA family. Type 2 subfamily.</text>
</comment>
<dbReference type="EC" id="1.17.99.9" evidence="1"/>
<dbReference type="EMBL" id="AM040264">
    <property type="protein sequence ID" value="CAJ10763.1"/>
    <property type="molecule type" value="Genomic_DNA"/>
</dbReference>
<dbReference type="RefSeq" id="WP_002969419.1">
    <property type="nucleotide sequence ID" value="NZ_KN046823.1"/>
</dbReference>
<dbReference type="SMR" id="Q2YNB0"/>
<dbReference type="STRING" id="359391.BAB1_0807"/>
<dbReference type="KEGG" id="bmf:BAB1_0807"/>
<dbReference type="PATRIC" id="fig|359391.11.peg.3118"/>
<dbReference type="HOGENOM" id="CLU_017627_0_0_5"/>
<dbReference type="PhylomeDB" id="Q2YNB0"/>
<dbReference type="UniPathway" id="UPA00269">
    <property type="reaction ID" value="UER00713"/>
</dbReference>
<dbReference type="Proteomes" id="UP000002719">
    <property type="component" value="Chromosome I"/>
</dbReference>
<dbReference type="GO" id="GO:0005886">
    <property type="term" value="C:plasma membrane"/>
    <property type="evidence" value="ECO:0007669"/>
    <property type="project" value="UniProtKB-SubCell"/>
</dbReference>
<dbReference type="GO" id="GO:0046872">
    <property type="term" value="F:metal ion binding"/>
    <property type="evidence" value="ECO:0007669"/>
    <property type="project" value="UniProtKB-KW"/>
</dbReference>
<dbReference type="GO" id="GO:0016653">
    <property type="term" value="F:oxidoreductase activity, acting on NAD(P)H, heme protein as acceptor"/>
    <property type="evidence" value="ECO:0007669"/>
    <property type="project" value="InterPro"/>
</dbReference>
<dbReference type="GO" id="GO:0006784">
    <property type="term" value="P:heme A biosynthetic process"/>
    <property type="evidence" value="ECO:0007669"/>
    <property type="project" value="UniProtKB-UniRule"/>
</dbReference>
<dbReference type="HAMAP" id="MF_01665">
    <property type="entry name" value="HemeA_synth_type2"/>
    <property type="match status" value="1"/>
</dbReference>
<dbReference type="InterPro" id="IPR003780">
    <property type="entry name" value="COX15/CtaA_fam"/>
</dbReference>
<dbReference type="InterPro" id="IPR023754">
    <property type="entry name" value="HemeA_Synthase_type2"/>
</dbReference>
<dbReference type="PANTHER" id="PTHR23289">
    <property type="entry name" value="CYTOCHROME C OXIDASE ASSEMBLY PROTEIN COX15"/>
    <property type="match status" value="1"/>
</dbReference>
<dbReference type="PANTHER" id="PTHR23289:SF2">
    <property type="entry name" value="CYTOCHROME C OXIDASE ASSEMBLY PROTEIN COX15 HOMOLOG"/>
    <property type="match status" value="1"/>
</dbReference>
<dbReference type="Pfam" id="PF02628">
    <property type="entry name" value="COX15-CtaA"/>
    <property type="match status" value="1"/>
</dbReference>
<gene>
    <name evidence="1" type="primary">ctaA</name>
    <name type="ordered locus">BAB1_0807</name>
</gene>
<proteinExistence type="inferred from homology"/>
<name>CTAA_BRUA2</name>
<sequence>MAATSAQHIGLQGHGTSRNDRDRRLVRYWLYAVFAVLIAIVMVGGATRMTGSGLSITEWKPIHGVIPPLNHAEWVEEFEKYQQIPQYQQINKGMSLAEFQYIFWWEWAHRLLARFVGFLVAVPLGFFWLTGRLKGGLKYRMLGLLALGGLQGAIGWWMVASGLSELTSVSQYRLAIHLTTACVIITAVFYIARGLVTYSERPAERSIQRFAGWIVFAVLVQIYLGGLVAGLHAGLTYNTWPLMDGAIIPSDLFTQAPWWRNLFENPKTVQFVHRMFAYTVLLLAILHAVQVWKNAPGTTHARRTIVLVGLVFIQAMIGIATLLMSAPLHLGLTHQFFALVVLAFAVAHWRATKGAYAA</sequence>
<evidence type="ECO:0000255" key="1">
    <source>
        <dbReference type="HAMAP-Rule" id="MF_01665"/>
    </source>
</evidence>
<protein>
    <recommendedName>
        <fullName evidence="1">Heme A synthase</fullName>
        <shortName evidence="1">HAS</shortName>
        <ecNumber evidence="1">1.17.99.9</ecNumber>
    </recommendedName>
    <alternativeName>
        <fullName evidence="1">Cytochrome aa3-controlling protein</fullName>
    </alternativeName>
</protein>
<keyword id="KW-1003">Cell membrane</keyword>
<keyword id="KW-0350">Heme biosynthesis</keyword>
<keyword id="KW-0408">Iron</keyword>
<keyword id="KW-0472">Membrane</keyword>
<keyword id="KW-0479">Metal-binding</keyword>
<keyword id="KW-0560">Oxidoreductase</keyword>
<keyword id="KW-1185">Reference proteome</keyword>
<keyword id="KW-0812">Transmembrane</keyword>
<keyword id="KW-1133">Transmembrane helix</keyword>
<feature type="chain" id="PRO_0000349021" description="Heme A synthase">
    <location>
        <begin position="1"/>
        <end position="358"/>
    </location>
</feature>
<feature type="transmembrane region" description="Helical" evidence="1">
    <location>
        <begin position="25"/>
        <end position="45"/>
    </location>
</feature>
<feature type="transmembrane region" description="Helical" evidence="1">
    <location>
        <begin position="111"/>
        <end position="131"/>
    </location>
</feature>
<feature type="transmembrane region" description="Helical" evidence="1">
    <location>
        <begin position="141"/>
        <end position="161"/>
    </location>
</feature>
<feature type="transmembrane region" description="Helical" evidence="1">
    <location>
        <begin position="176"/>
        <end position="196"/>
    </location>
</feature>
<feature type="transmembrane region" description="Helical" evidence="1">
    <location>
        <begin position="210"/>
        <end position="230"/>
    </location>
</feature>
<feature type="transmembrane region" description="Helical" evidence="1">
    <location>
        <begin position="269"/>
        <end position="289"/>
    </location>
</feature>
<feature type="transmembrane region" description="Helical" evidence="1">
    <location>
        <begin position="304"/>
        <end position="324"/>
    </location>
</feature>
<feature type="transmembrane region" description="Helical" evidence="1">
    <location>
        <begin position="326"/>
        <end position="346"/>
    </location>
</feature>
<feature type="binding site" description="axial binding residue" evidence="1">
    <location>
        <position position="273"/>
    </location>
    <ligand>
        <name>heme</name>
        <dbReference type="ChEBI" id="CHEBI:30413"/>
    </ligand>
    <ligandPart>
        <name>Fe</name>
        <dbReference type="ChEBI" id="CHEBI:18248"/>
    </ligandPart>
</feature>
<feature type="binding site" description="axial binding residue" evidence="1">
    <location>
        <position position="334"/>
    </location>
    <ligand>
        <name>heme</name>
        <dbReference type="ChEBI" id="CHEBI:30413"/>
    </ligand>
    <ligandPart>
        <name>Fe</name>
        <dbReference type="ChEBI" id="CHEBI:18248"/>
    </ligandPart>
</feature>